<reference key="1">
    <citation type="journal article" date="2005" name="Science">
        <title>Life at depth: Photobacterium profundum genome sequence and expression analysis.</title>
        <authorList>
            <person name="Vezzi A."/>
            <person name="Campanaro S."/>
            <person name="D'Angelo M."/>
            <person name="Simonato F."/>
            <person name="Vitulo N."/>
            <person name="Lauro F.M."/>
            <person name="Cestaro A."/>
            <person name="Malacrida G."/>
            <person name="Simionati B."/>
            <person name="Cannata N."/>
            <person name="Romualdi C."/>
            <person name="Bartlett D.H."/>
            <person name="Valle G."/>
        </authorList>
    </citation>
    <scope>NUCLEOTIDE SEQUENCE [LARGE SCALE GENOMIC DNA]</scope>
    <source>
        <strain>ATCC BAA-1253 / SS9</strain>
    </source>
</reference>
<dbReference type="EC" id="4.2.1.10" evidence="1"/>
<dbReference type="EMBL" id="CR378674">
    <property type="protein sequence ID" value="CAG21688.1"/>
    <property type="molecule type" value="Genomic_DNA"/>
</dbReference>
<dbReference type="RefSeq" id="WP_006233731.1">
    <property type="nucleotide sequence ID" value="NC_006370.1"/>
</dbReference>
<dbReference type="SMR" id="Q6LLZ0"/>
<dbReference type="STRING" id="298386.PBPRA3404"/>
<dbReference type="KEGG" id="ppr:PBPRA3404"/>
<dbReference type="eggNOG" id="COG0757">
    <property type="taxonomic scope" value="Bacteria"/>
</dbReference>
<dbReference type="HOGENOM" id="CLU_090968_1_0_6"/>
<dbReference type="UniPathway" id="UPA00053">
    <property type="reaction ID" value="UER00086"/>
</dbReference>
<dbReference type="Proteomes" id="UP000000593">
    <property type="component" value="Chromosome 1"/>
</dbReference>
<dbReference type="GO" id="GO:0003855">
    <property type="term" value="F:3-dehydroquinate dehydratase activity"/>
    <property type="evidence" value="ECO:0007669"/>
    <property type="project" value="UniProtKB-UniRule"/>
</dbReference>
<dbReference type="GO" id="GO:0008652">
    <property type="term" value="P:amino acid biosynthetic process"/>
    <property type="evidence" value="ECO:0007669"/>
    <property type="project" value="UniProtKB-KW"/>
</dbReference>
<dbReference type="GO" id="GO:0009073">
    <property type="term" value="P:aromatic amino acid family biosynthetic process"/>
    <property type="evidence" value="ECO:0007669"/>
    <property type="project" value="UniProtKB-KW"/>
</dbReference>
<dbReference type="GO" id="GO:0009423">
    <property type="term" value="P:chorismate biosynthetic process"/>
    <property type="evidence" value="ECO:0007669"/>
    <property type="project" value="UniProtKB-UniRule"/>
</dbReference>
<dbReference type="GO" id="GO:0019631">
    <property type="term" value="P:quinate catabolic process"/>
    <property type="evidence" value="ECO:0007669"/>
    <property type="project" value="TreeGrafter"/>
</dbReference>
<dbReference type="CDD" id="cd00466">
    <property type="entry name" value="DHQase_II"/>
    <property type="match status" value="1"/>
</dbReference>
<dbReference type="Gene3D" id="3.40.50.9100">
    <property type="entry name" value="Dehydroquinase, class II"/>
    <property type="match status" value="1"/>
</dbReference>
<dbReference type="HAMAP" id="MF_00169">
    <property type="entry name" value="AroQ"/>
    <property type="match status" value="1"/>
</dbReference>
<dbReference type="InterPro" id="IPR001874">
    <property type="entry name" value="DHquinase_II"/>
</dbReference>
<dbReference type="InterPro" id="IPR018509">
    <property type="entry name" value="DHquinase_II_CS"/>
</dbReference>
<dbReference type="InterPro" id="IPR036441">
    <property type="entry name" value="DHquinase_II_sf"/>
</dbReference>
<dbReference type="NCBIfam" id="TIGR01088">
    <property type="entry name" value="aroQ"/>
    <property type="match status" value="1"/>
</dbReference>
<dbReference type="NCBIfam" id="NF003804">
    <property type="entry name" value="PRK05395.1-1"/>
    <property type="match status" value="1"/>
</dbReference>
<dbReference type="NCBIfam" id="NF003805">
    <property type="entry name" value="PRK05395.1-2"/>
    <property type="match status" value="1"/>
</dbReference>
<dbReference type="NCBIfam" id="NF003806">
    <property type="entry name" value="PRK05395.1-3"/>
    <property type="match status" value="1"/>
</dbReference>
<dbReference type="NCBIfam" id="NF003807">
    <property type="entry name" value="PRK05395.1-4"/>
    <property type="match status" value="1"/>
</dbReference>
<dbReference type="PANTHER" id="PTHR21272">
    <property type="entry name" value="CATABOLIC 3-DEHYDROQUINASE"/>
    <property type="match status" value="1"/>
</dbReference>
<dbReference type="PANTHER" id="PTHR21272:SF3">
    <property type="entry name" value="CATABOLIC 3-DEHYDROQUINASE"/>
    <property type="match status" value="1"/>
</dbReference>
<dbReference type="Pfam" id="PF01220">
    <property type="entry name" value="DHquinase_II"/>
    <property type="match status" value="1"/>
</dbReference>
<dbReference type="PIRSF" id="PIRSF001399">
    <property type="entry name" value="DHquinase_II"/>
    <property type="match status" value="1"/>
</dbReference>
<dbReference type="SUPFAM" id="SSF52304">
    <property type="entry name" value="Type II 3-dehydroquinate dehydratase"/>
    <property type="match status" value="1"/>
</dbReference>
<dbReference type="PROSITE" id="PS01029">
    <property type="entry name" value="DEHYDROQUINASE_II"/>
    <property type="match status" value="1"/>
</dbReference>
<keyword id="KW-0028">Amino-acid biosynthesis</keyword>
<keyword id="KW-0057">Aromatic amino acid biosynthesis</keyword>
<keyword id="KW-0456">Lyase</keyword>
<keyword id="KW-1185">Reference proteome</keyword>
<gene>
    <name evidence="1" type="primary">aroQ</name>
    <name type="ordered locus">PBPRA3404</name>
</gene>
<comment type="function">
    <text evidence="1">Catalyzes a trans-dehydration via an enolate intermediate.</text>
</comment>
<comment type="catalytic activity">
    <reaction evidence="1">
        <text>3-dehydroquinate = 3-dehydroshikimate + H2O</text>
        <dbReference type="Rhea" id="RHEA:21096"/>
        <dbReference type="ChEBI" id="CHEBI:15377"/>
        <dbReference type="ChEBI" id="CHEBI:16630"/>
        <dbReference type="ChEBI" id="CHEBI:32364"/>
        <dbReference type="EC" id="4.2.1.10"/>
    </reaction>
</comment>
<comment type="pathway">
    <text evidence="1">Metabolic intermediate biosynthesis; chorismate biosynthesis; chorismate from D-erythrose 4-phosphate and phosphoenolpyruvate: step 3/7.</text>
</comment>
<comment type="subunit">
    <text evidence="1">Homododecamer.</text>
</comment>
<comment type="similarity">
    <text evidence="1">Belongs to the type-II 3-dehydroquinase family.</text>
</comment>
<feature type="chain" id="PRO_0000159914" description="3-dehydroquinate dehydratase">
    <location>
        <begin position="1"/>
        <end position="150"/>
    </location>
</feature>
<feature type="active site" description="Proton acceptor" evidence="1">
    <location>
        <position position="26"/>
    </location>
</feature>
<feature type="active site" description="Proton donor" evidence="1">
    <location>
        <position position="103"/>
    </location>
</feature>
<feature type="binding site" evidence="1">
    <location>
        <position position="77"/>
    </location>
    <ligand>
        <name>substrate</name>
    </ligand>
</feature>
<feature type="binding site" evidence="1">
    <location>
        <position position="83"/>
    </location>
    <ligand>
        <name>substrate</name>
    </ligand>
</feature>
<feature type="binding site" evidence="1">
    <location>
        <position position="90"/>
    </location>
    <ligand>
        <name>substrate</name>
    </ligand>
</feature>
<feature type="binding site" evidence="1">
    <location>
        <begin position="104"/>
        <end position="105"/>
    </location>
    <ligand>
        <name>substrate</name>
    </ligand>
</feature>
<feature type="binding site" evidence="1">
    <location>
        <position position="114"/>
    </location>
    <ligand>
        <name>substrate</name>
    </ligand>
</feature>
<feature type="site" description="Transition state stabilizer" evidence="1">
    <location>
        <position position="21"/>
    </location>
</feature>
<proteinExistence type="inferred from homology"/>
<accession>Q6LLZ0</accession>
<organism>
    <name type="scientific">Photobacterium profundum (strain SS9)</name>
    <dbReference type="NCBI Taxonomy" id="298386"/>
    <lineage>
        <taxon>Bacteria</taxon>
        <taxon>Pseudomonadati</taxon>
        <taxon>Pseudomonadota</taxon>
        <taxon>Gammaproteobacteria</taxon>
        <taxon>Vibrionales</taxon>
        <taxon>Vibrionaceae</taxon>
        <taxon>Photobacterium</taxon>
    </lineage>
</organism>
<sequence>MSTVKRILLINGPNLNLLGLREPGHYGHHTLAQLVADLTVKATNLSVTLDHIQSNAEHELIDAIHQAHGNVDFIIINPAAFTHTSVAIRDALLGVAIPFIEVHLSNVHAREPFRHHSYLSDKAVGVICGLGPDGYEFALNAAVRRLQSES</sequence>
<evidence type="ECO:0000255" key="1">
    <source>
        <dbReference type="HAMAP-Rule" id="MF_00169"/>
    </source>
</evidence>
<protein>
    <recommendedName>
        <fullName evidence="1">3-dehydroquinate dehydratase</fullName>
        <shortName evidence="1">3-dehydroquinase</shortName>
        <ecNumber evidence="1">4.2.1.10</ecNumber>
    </recommendedName>
    <alternativeName>
        <fullName evidence="1">Type II DHQase</fullName>
    </alternativeName>
</protein>
<name>AROQ_PHOPR</name>